<organism>
    <name type="scientific">Arabidopsis thaliana</name>
    <name type="common">Mouse-ear cress</name>
    <dbReference type="NCBI Taxonomy" id="3702"/>
    <lineage>
        <taxon>Eukaryota</taxon>
        <taxon>Viridiplantae</taxon>
        <taxon>Streptophyta</taxon>
        <taxon>Embryophyta</taxon>
        <taxon>Tracheophyta</taxon>
        <taxon>Spermatophyta</taxon>
        <taxon>Magnoliopsida</taxon>
        <taxon>eudicotyledons</taxon>
        <taxon>Gunneridae</taxon>
        <taxon>Pentapetalae</taxon>
        <taxon>rosids</taxon>
        <taxon>malvids</taxon>
        <taxon>Brassicales</taxon>
        <taxon>Brassicaceae</taxon>
        <taxon>Camelineae</taxon>
        <taxon>Arabidopsis</taxon>
    </lineage>
</organism>
<feature type="chain" id="PRO_0000411107" description="Putative inactive magnesium transporter MRS2-8">
    <location>
        <begin position="1"/>
        <end position="294"/>
    </location>
</feature>
<feature type="coiled-coil region" evidence="1">
    <location>
        <begin position="179"/>
        <end position="216"/>
    </location>
</feature>
<comment type="similarity">
    <text evidence="2">Belongs to the CorA metal ion transporter (MIT) (TC 1.A.35.5) family.</text>
</comment>
<comment type="caution">
    <text evidence="2">Could be the product of a pseudogene. In strain cv. Columbia, a naturally occurring frameshift at position 277 results in a truncated MRS2-8 protein lacking the two transmembrane regions, which are conserved features of the family. A complete sequence for MRS2-8 can be found in strain cv. Landsberg erecta (AC P0CZ21).</text>
</comment>
<comment type="sequence caution" evidence="2">
    <conflict type="erroneous gene model prediction">
        <sequence resource="EMBL-CDS" id="BAB09530"/>
    </conflict>
</comment>
<comment type="sequence caution" evidence="2">
    <conflict type="erroneous gene model prediction">
        <sequence resource="EMBL-CDS" id="CAB89358"/>
    </conflict>
</comment>
<gene>
    <name type="primary">MRS2-8</name>
    <name type="synonym">MGT8</name>
    <name type="ordered locus">At5g09720</name>
    <name type="ORF">F17I14.90</name>
    <name type="ORF">MTH16.17</name>
</gene>
<reference key="1">
    <citation type="journal article" date="1999" name="DNA Res.">
        <title>Structural analysis of Arabidopsis thaliana chromosome 5. IX. Sequence features of the regions of 1,011,550 bp covered by seventeen P1 and TAC clones.</title>
        <authorList>
            <person name="Kaneko T."/>
            <person name="Katoh T."/>
            <person name="Sato S."/>
            <person name="Nakamura Y."/>
            <person name="Asamizu E."/>
            <person name="Kotani H."/>
            <person name="Miyajima N."/>
            <person name="Tabata S."/>
        </authorList>
    </citation>
    <scope>NUCLEOTIDE SEQUENCE [LARGE SCALE GENOMIC DNA]</scope>
    <source>
        <strain>cv. Columbia</strain>
    </source>
</reference>
<reference key="2">
    <citation type="journal article" date="2000" name="Nature">
        <title>Sequence and analysis of chromosome 5 of the plant Arabidopsis thaliana.</title>
        <authorList>
            <person name="Tabata S."/>
            <person name="Kaneko T."/>
            <person name="Nakamura Y."/>
            <person name="Kotani H."/>
            <person name="Kato T."/>
            <person name="Asamizu E."/>
            <person name="Miyajima N."/>
            <person name="Sasamoto S."/>
            <person name="Kimura T."/>
            <person name="Hosouchi T."/>
            <person name="Kawashima K."/>
            <person name="Kohara M."/>
            <person name="Matsumoto M."/>
            <person name="Matsuno A."/>
            <person name="Muraki A."/>
            <person name="Nakayama S."/>
            <person name="Nakazaki N."/>
            <person name="Naruo K."/>
            <person name="Okumura S."/>
            <person name="Shinpo S."/>
            <person name="Takeuchi C."/>
            <person name="Wada T."/>
            <person name="Watanabe A."/>
            <person name="Yamada M."/>
            <person name="Yasuda M."/>
            <person name="Sato S."/>
            <person name="de la Bastide M."/>
            <person name="Huang E."/>
            <person name="Spiegel L."/>
            <person name="Gnoj L."/>
            <person name="O'Shaughnessy A."/>
            <person name="Preston R."/>
            <person name="Habermann K."/>
            <person name="Murray J."/>
            <person name="Johnson D."/>
            <person name="Rohlfing T."/>
            <person name="Nelson J."/>
            <person name="Stoneking T."/>
            <person name="Pepin K."/>
            <person name="Spieth J."/>
            <person name="Sekhon M."/>
            <person name="Armstrong J."/>
            <person name="Becker M."/>
            <person name="Belter E."/>
            <person name="Cordum H."/>
            <person name="Cordes M."/>
            <person name="Courtney L."/>
            <person name="Courtney W."/>
            <person name="Dante M."/>
            <person name="Du H."/>
            <person name="Edwards J."/>
            <person name="Fryman J."/>
            <person name="Haakensen B."/>
            <person name="Lamar E."/>
            <person name="Latreille P."/>
            <person name="Leonard S."/>
            <person name="Meyer R."/>
            <person name="Mulvaney E."/>
            <person name="Ozersky P."/>
            <person name="Riley A."/>
            <person name="Strowmatt C."/>
            <person name="Wagner-McPherson C."/>
            <person name="Wollam A."/>
            <person name="Yoakum M."/>
            <person name="Bell M."/>
            <person name="Dedhia N."/>
            <person name="Parnell L."/>
            <person name="Shah R."/>
            <person name="Rodriguez M."/>
            <person name="Hoon See L."/>
            <person name="Vil D."/>
            <person name="Baker J."/>
            <person name="Kirchoff K."/>
            <person name="Toth K."/>
            <person name="King L."/>
            <person name="Bahret A."/>
            <person name="Miller B."/>
            <person name="Marra M.A."/>
            <person name="Martienssen R."/>
            <person name="McCombie W.R."/>
            <person name="Wilson R.K."/>
            <person name="Murphy G."/>
            <person name="Bancroft I."/>
            <person name="Volckaert G."/>
            <person name="Wambutt R."/>
            <person name="Duesterhoeft A."/>
            <person name="Stiekema W."/>
            <person name="Pohl T."/>
            <person name="Entian K.-D."/>
            <person name="Terryn N."/>
            <person name="Hartley N."/>
            <person name="Bent E."/>
            <person name="Johnson S."/>
            <person name="Langham S.-A."/>
            <person name="McCullagh B."/>
            <person name="Robben J."/>
            <person name="Grymonprez B."/>
            <person name="Zimmermann W."/>
            <person name="Ramsperger U."/>
            <person name="Wedler H."/>
            <person name="Balke K."/>
            <person name="Wedler E."/>
            <person name="Peters S."/>
            <person name="van Staveren M."/>
            <person name="Dirkse W."/>
            <person name="Mooijman P."/>
            <person name="Klein Lankhorst R."/>
            <person name="Weitzenegger T."/>
            <person name="Bothe G."/>
            <person name="Rose M."/>
            <person name="Hauf J."/>
            <person name="Berneiser S."/>
            <person name="Hempel S."/>
            <person name="Feldpausch M."/>
            <person name="Lamberth S."/>
            <person name="Villarroel R."/>
            <person name="Gielen J."/>
            <person name="Ardiles W."/>
            <person name="Bents O."/>
            <person name="Lemcke K."/>
            <person name="Kolesov G."/>
            <person name="Mayer K.F.X."/>
            <person name="Rudd S."/>
            <person name="Schoof H."/>
            <person name="Schueller C."/>
            <person name="Zaccaria P."/>
            <person name="Mewes H.-W."/>
            <person name="Bevan M."/>
            <person name="Fransz P.F."/>
        </authorList>
    </citation>
    <scope>NUCLEOTIDE SEQUENCE [LARGE SCALE GENOMIC DNA]</scope>
    <source>
        <strain>cv. Columbia</strain>
    </source>
</reference>
<reference key="3">
    <citation type="journal article" date="2017" name="Plant J.">
        <title>Araport11: a complete reannotation of the Arabidopsis thaliana reference genome.</title>
        <authorList>
            <person name="Cheng C.Y."/>
            <person name="Krishnakumar V."/>
            <person name="Chan A.P."/>
            <person name="Thibaud-Nissen F."/>
            <person name="Schobel S."/>
            <person name="Town C.D."/>
        </authorList>
    </citation>
    <scope>GENOME REANNOTATION</scope>
    <source>
        <strain>cv. Columbia</strain>
    </source>
</reference>
<reference key="4">
    <citation type="submission" date="2004-09" db="EMBL/GenBank/DDBJ databases">
        <title>Large-scale analysis of RIKEN Arabidopsis full-length (RAFL) cDNAs.</title>
        <authorList>
            <person name="Totoki Y."/>
            <person name="Seki M."/>
            <person name="Ishida J."/>
            <person name="Nakajima M."/>
            <person name="Enju A."/>
            <person name="Kamiya A."/>
            <person name="Narusaka M."/>
            <person name="Shin-i T."/>
            <person name="Nakagawa M."/>
            <person name="Sakamoto N."/>
            <person name="Oishi K."/>
            <person name="Kohara Y."/>
            <person name="Kobayashi M."/>
            <person name="Toyoda A."/>
            <person name="Sakaki Y."/>
            <person name="Sakurai T."/>
            <person name="Iida K."/>
            <person name="Akiyama K."/>
            <person name="Satou M."/>
            <person name="Toyoda T."/>
            <person name="Konagaya A."/>
            <person name="Carninci P."/>
            <person name="Kawai J."/>
            <person name="Hayashizaki Y."/>
            <person name="Shinozaki K."/>
        </authorList>
    </citation>
    <scope>NUCLEOTIDE SEQUENCE [LARGE SCALE MRNA]</scope>
    <source>
        <strain>cv. Columbia</strain>
    </source>
</reference>
<reference key="5">
    <citation type="journal article" date="2009" name="Plant Cell">
        <title>A root-expressed magnesium transporter of the MRS2/MGT gene family in Arabidopsis thaliana allows for growth in low-Mg2+ environments.</title>
        <authorList>
            <person name="Gebert M."/>
            <person name="Meschenmoser K."/>
            <person name="Svidova S."/>
            <person name="Weghuber J."/>
            <person name="Schweyen R."/>
            <person name="Eifler K."/>
            <person name="Lenz H."/>
            <person name="Weyand K."/>
            <person name="Knoop V."/>
        </authorList>
    </citation>
    <scope>GENE FAMILY</scope>
    <scope>NOMENCLATURE</scope>
</reference>
<proteinExistence type="uncertain"/>
<evidence type="ECO:0000255" key="1"/>
<evidence type="ECO:0000305" key="2"/>
<name>MRS2I_ARATH</name>
<protein>
    <recommendedName>
        <fullName>Putative inactive magnesium transporter MRS2-8</fullName>
    </recommendedName>
    <alternativeName>
        <fullName>Magnesium Transporter 8</fullName>
        <shortName>AtMGT8</shortName>
    </alternativeName>
</protein>
<keyword id="KW-0175">Coiled coil</keyword>
<keyword id="KW-1185">Reference proteome</keyword>
<dbReference type="EMBL" id="AB020752">
    <property type="protein sequence ID" value="BAB09530.1"/>
    <property type="status" value="ALT_SEQ"/>
    <property type="molecule type" value="Genomic_DNA"/>
</dbReference>
<dbReference type="EMBL" id="AL353994">
    <property type="protein sequence ID" value="CAB89358.1"/>
    <property type="status" value="ALT_SEQ"/>
    <property type="molecule type" value="Genomic_DNA"/>
</dbReference>
<dbReference type="EMBL" id="CP002688">
    <property type="protein sequence ID" value="AED91438.1"/>
    <property type="molecule type" value="Genomic_DNA"/>
</dbReference>
<dbReference type="EMBL" id="CP002688">
    <property type="protein sequence ID" value="ANM69671.1"/>
    <property type="molecule type" value="Genomic_DNA"/>
</dbReference>
<dbReference type="EMBL" id="AK175385">
    <property type="protein sequence ID" value="BAD43148.1"/>
    <property type="molecule type" value="mRNA"/>
</dbReference>
<dbReference type="RefSeq" id="NP_001331333.1">
    <property type="nucleotide sequence ID" value="NM_001343066.1"/>
</dbReference>
<dbReference type="RefSeq" id="NP_196534.4">
    <property type="nucleotide sequence ID" value="NM_121009.5"/>
</dbReference>
<dbReference type="SMR" id="P0CZ22"/>
<dbReference type="FunCoup" id="P0CZ22">
    <property type="interactions" value="223"/>
</dbReference>
<dbReference type="STRING" id="3702.P0CZ22"/>
<dbReference type="PaxDb" id="3702-AT5G09720.1"/>
<dbReference type="EnsemblPlants" id="AT5G09720.1">
    <property type="protein sequence ID" value="AT5G09720.1"/>
    <property type="gene ID" value="AT5G09720"/>
</dbReference>
<dbReference type="EnsemblPlants" id="AT5G09720.2">
    <property type="protein sequence ID" value="AT5G09720.2"/>
    <property type="gene ID" value="AT5G09720"/>
</dbReference>
<dbReference type="GeneID" id="830831"/>
<dbReference type="Gramene" id="AT5G09720.1">
    <property type="protein sequence ID" value="AT5G09720.1"/>
    <property type="gene ID" value="AT5G09720"/>
</dbReference>
<dbReference type="Gramene" id="AT5G09720.2">
    <property type="protein sequence ID" value="AT5G09720.2"/>
    <property type="gene ID" value="AT5G09720"/>
</dbReference>
<dbReference type="KEGG" id="ath:AT5G09720"/>
<dbReference type="Araport" id="AT5G09720"/>
<dbReference type="TAIR" id="AT5G09720"/>
<dbReference type="eggNOG" id="KOG2662">
    <property type="taxonomic scope" value="Eukaryota"/>
</dbReference>
<dbReference type="HOGENOM" id="CLU_034694_1_0_1"/>
<dbReference type="InParanoid" id="P0CZ22"/>
<dbReference type="OMA" id="SATICFD"/>
<dbReference type="Proteomes" id="UP000006548">
    <property type="component" value="Chromosome 5"/>
</dbReference>
<dbReference type="ExpressionAtlas" id="P0CZ22">
    <property type="expression patterns" value="baseline and differential"/>
</dbReference>
<dbReference type="GO" id="GO:0015095">
    <property type="term" value="F:magnesium ion transmembrane transporter activity"/>
    <property type="evidence" value="ECO:0007669"/>
    <property type="project" value="UniProtKB-ARBA"/>
</dbReference>
<dbReference type="CDD" id="cd12823">
    <property type="entry name" value="Mrs2_Mfm1p-like"/>
    <property type="match status" value="1"/>
</dbReference>
<dbReference type="FunFam" id="2.40.128.330:FF:000001">
    <property type="entry name" value="Magnesium transporter MRS2-1"/>
    <property type="match status" value="1"/>
</dbReference>
<dbReference type="Gene3D" id="2.40.128.330">
    <property type="match status" value="1"/>
</dbReference>
<dbReference type="Gene3D" id="1.20.58.340">
    <property type="entry name" value="Magnesium transport protein CorA, transmembrane region"/>
    <property type="match status" value="1"/>
</dbReference>
<dbReference type="InterPro" id="IPR039204">
    <property type="entry name" value="MRS2-like"/>
</dbReference>
<dbReference type="PANTHER" id="PTHR13890:SF38">
    <property type="entry name" value="MAGNESIUM TRANSPORTER MRS2-7-RELATED"/>
    <property type="match status" value="1"/>
</dbReference>
<dbReference type="PANTHER" id="PTHR13890">
    <property type="entry name" value="RNA SPLICING PROTEIN MRS2, MITOCHONDRIAL"/>
    <property type="match status" value="1"/>
</dbReference>
<dbReference type="Pfam" id="PF22099">
    <property type="entry name" value="MRS2-like"/>
    <property type="match status" value="1"/>
</dbReference>
<sequence>MLPNEELVPVKRITPQSSWSWISIDATGKKTVLDVDKYVIMHRVQIHARDLRILDPNLFYPSAILGRERAIVLNLEHIKAIITAKEVLIQDSSDENLIPTLEEFQTRLSVGNKAHGGQLDGDVVEEDESAFEFRALEVALEAICSFLAARTIELEKSAYPALDELTLKLTSRNLLRVCKLKSSMTRLTAQVQKIKDELEQLLEDDEDMAELYLSRKLAGASSPAIDSGEHINWYPTSPTIGAKISRAKSHLVRSATVRGDDKNDVEEVEMLLEAHFYANRQNFEQINRATRVCG</sequence>
<accession>P0CZ22</accession>
<accession>Q682I2</accession>
<accession>Q8H1G7</accession>
<accession>Q9FXX0</accession>
<accession>Q9LXD5</accession>